<gene>
    <name evidence="1" type="primary">tmaR</name>
    <name type="ordered locus">SG1134</name>
</gene>
<sequence length="114" mass="13547">MDHIKPSFHDVLEFVRMFRRKNKLQREIADNEKRIRDNQKRVLLLDNLSDYIKSGMSIEEIQAIISNMRTDYEDRVDDYIIKNAELSKERRELSKKLKAIGEVKALNSVIDKQP</sequence>
<reference key="1">
    <citation type="journal article" date="2006" name="Genome Res.">
        <title>Massive genome erosion and functional adaptations provide insights into the symbiotic lifestyle of Sodalis glossinidius in the tsetse host.</title>
        <authorList>
            <person name="Toh H."/>
            <person name="Weiss B.L."/>
            <person name="Perkin S.A.H."/>
            <person name="Yamashita A."/>
            <person name="Oshima K."/>
            <person name="Hattori M."/>
            <person name="Aksoy S."/>
        </authorList>
    </citation>
    <scope>NUCLEOTIDE SEQUENCE [LARGE SCALE GENOMIC DNA]</scope>
    <source>
        <strain>morsitans</strain>
    </source>
</reference>
<comment type="function">
    <text evidence="1">Pole-localizer protein involved in the regulation of several cellular processes.</text>
</comment>
<comment type="subcellular location">
    <subcellularLocation>
        <location evidence="1">Cytoplasm</location>
    </subcellularLocation>
</comment>
<comment type="similarity">
    <text evidence="1">Belongs to the pole-localizer TmaR family.</text>
</comment>
<keyword id="KW-0175">Coiled coil</keyword>
<keyword id="KW-0963">Cytoplasm</keyword>
<organism>
    <name type="scientific">Sodalis glossinidius (strain morsitans)</name>
    <dbReference type="NCBI Taxonomy" id="343509"/>
    <lineage>
        <taxon>Bacteria</taxon>
        <taxon>Pseudomonadati</taxon>
        <taxon>Pseudomonadota</taxon>
        <taxon>Gammaproteobacteria</taxon>
        <taxon>Enterobacterales</taxon>
        <taxon>Bruguierivoracaceae</taxon>
        <taxon>Sodalis</taxon>
    </lineage>
</organism>
<feature type="chain" id="PRO_1000044937" description="Pole-localizer protein TmaR">
    <location>
        <begin position="1"/>
        <end position="114"/>
    </location>
</feature>
<feature type="coiled-coil region" evidence="1">
    <location>
        <begin position="21"/>
        <end position="41"/>
    </location>
</feature>
<feature type="coiled-coil region" evidence="1">
    <location>
        <begin position="69"/>
        <end position="103"/>
    </location>
</feature>
<proteinExistence type="inferred from homology"/>
<name>TMAR_SODGM</name>
<evidence type="ECO:0000255" key="1">
    <source>
        <dbReference type="HAMAP-Rule" id="MF_00683"/>
    </source>
</evidence>
<accession>Q2NTW6</accession>
<protein>
    <recommendedName>
        <fullName evidence="1">Pole-localizer protein TmaR</fullName>
    </recommendedName>
</protein>
<dbReference type="EMBL" id="AP008232">
    <property type="protein sequence ID" value="BAE74409.1"/>
    <property type="molecule type" value="Genomic_DNA"/>
</dbReference>
<dbReference type="RefSeq" id="WP_011410969.1">
    <property type="nucleotide sequence ID" value="NC_007712.1"/>
</dbReference>
<dbReference type="SMR" id="Q2NTW6"/>
<dbReference type="STRING" id="343509.SG1134"/>
<dbReference type="KEGG" id="sgl:SG1134"/>
<dbReference type="eggNOG" id="COG2926">
    <property type="taxonomic scope" value="Bacteria"/>
</dbReference>
<dbReference type="HOGENOM" id="CLU_153146_0_0_6"/>
<dbReference type="OrthoDB" id="90485at2"/>
<dbReference type="BioCyc" id="SGLO343509:SGP1_RS09725-MONOMER"/>
<dbReference type="Proteomes" id="UP000001932">
    <property type="component" value="Chromosome"/>
</dbReference>
<dbReference type="GO" id="GO:0005829">
    <property type="term" value="C:cytosol"/>
    <property type="evidence" value="ECO:0007669"/>
    <property type="project" value="TreeGrafter"/>
</dbReference>
<dbReference type="HAMAP" id="MF_00683">
    <property type="entry name" value="Pole_loc_TmaR"/>
    <property type="match status" value="1"/>
</dbReference>
<dbReference type="InterPro" id="IPR007458">
    <property type="entry name" value="DUF496"/>
</dbReference>
<dbReference type="InterPro" id="IPR053375">
    <property type="entry name" value="UPF0265"/>
</dbReference>
<dbReference type="NCBIfam" id="NF003844">
    <property type="entry name" value="PRK05423.1"/>
    <property type="match status" value="1"/>
</dbReference>
<dbReference type="NCBIfam" id="NF040881">
    <property type="entry name" value="PTS_reg_TmaR"/>
    <property type="match status" value="1"/>
</dbReference>
<dbReference type="PANTHER" id="PTHR39591">
    <property type="entry name" value="UPF0265 PROTEIN YEEX"/>
    <property type="match status" value="1"/>
</dbReference>
<dbReference type="PANTHER" id="PTHR39591:SF1">
    <property type="entry name" value="UPF0265 PROTEIN YEEX"/>
    <property type="match status" value="1"/>
</dbReference>
<dbReference type="Pfam" id="PF04363">
    <property type="entry name" value="DUF496"/>
    <property type="match status" value="1"/>
</dbReference>
<dbReference type="PIRSF" id="PIRSF028773">
    <property type="entry name" value="UCP028773"/>
    <property type="match status" value="1"/>
</dbReference>